<proteinExistence type="inferred from homology"/>
<sequence>MKRTKSIRHASFRKNWSARHLTPVALAVATVFMLAGCEKSDETVSLYQNADDCSAANPGKSAECTTAYNNALKEAERTAPKYATREDCVAEFGEGQCQQAPAQAGMAPENQAQAQQSSGSFWMPLMAGYMMGRLMGGGAGFAQQPLFSSKNPASPAYGKYTDATGKNYGAAQPGRTMTVPKTAMAPKPATTTTVTRGGFGESVAKQSTMQRSATGTSSRSMGG</sequence>
<name>YGIB_ECOHS</name>
<protein>
    <recommendedName>
        <fullName evidence="1">UPF0441 protein YgiB</fullName>
    </recommendedName>
</protein>
<organism>
    <name type="scientific">Escherichia coli O9:H4 (strain HS)</name>
    <dbReference type="NCBI Taxonomy" id="331112"/>
    <lineage>
        <taxon>Bacteria</taxon>
        <taxon>Pseudomonadati</taxon>
        <taxon>Pseudomonadota</taxon>
        <taxon>Gammaproteobacteria</taxon>
        <taxon>Enterobacterales</taxon>
        <taxon>Enterobacteriaceae</taxon>
        <taxon>Escherichia</taxon>
    </lineage>
</organism>
<reference key="1">
    <citation type="journal article" date="2008" name="J. Bacteriol.">
        <title>The pangenome structure of Escherichia coli: comparative genomic analysis of E. coli commensal and pathogenic isolates.</title>
        <authorList>
            <person name="Rasko D.A."/>
            <person name="Rosovitz M.J."/>
            <person name="Myers G.S.A."/>
            <person name="Mongodin E.F."/>
            <person name="Fricke W.F."/>
            <person name="Gajer P."/>
            <person name="Crabtree J."/>
            <person name="Sebaihia M."/>
            <person name="Thomson N.R."/>
            <person name="Chaudhuri R."/>
            <person name="Henderson I.R."/>
            <person name="Sperandio V."/>
            <person name="Ravel J."/>
        </authorList>
    </citation>
    <scope>NUCLEOTIDE SEQUENCE [LARGE SCALE GENOMIC DNA]</scope>
    <source>
        <strain>HS</strain>
    </source>
</reference>
<gene>
    <name evidence="1" type="primary">ygiB</name>
    <name type="ordered locus">EcHS_A3214</name>
</gene>
<comment type="similarity">
    <text evidence="1">Belongs to the UPF0441 family.</text>
</comment>
<evidence type="ECO:0000255" key="1">
    <source>
        <dbReference type="HAMAP-Rule" id="MF_01188"/>
    </source>
</evidence>
<evidence type="ECO:0000256" key="2">
    <source>
        <dbReference type="SAM" id="MobiDB-lite"/>
    </source>
</evidence>
<accession>A8A4J3</accession>
<dbReference type="EMBL" id="CP000802">
    <property type="protein sequence ID" value="ABV07447.1"/>
    <property type="molecule type" value="Genomic_DNA"/>
</dbReference>
<dbReference type="RefSeq" id="WP_000831543.1">
    <property type="nucleotide sequence ID" value="NC_009800.1"/>
</dbReference>
<dbReference type="SMR" id="A8A4J3"/>
<dbReference type="KEGG" id="ecx:EcHS_A3214"/>
<dbReference type="HOGENOM" id="CLU_095624_0_0_6"/>
<dbReference type="HAMAP" id="MF_01188">
    <property type="entry name" value="UPF0441"/>
    <property type="match status" value="1"/>
</dbReference>
<dbReference type="InterPro" id="IPR009576">
    <property type="entry name" value="Biofilm_formation_YgiB"/>
</dbReference>
<dbReference type="NCBIfam" id="NF008655">
    <property type="entry name" value="PRK11653.1"/>
    <property type="match status" value="1"/>
</dbReference>
<dbReference type="Pfam" id="PF06693">
    <property type="entry name" value="DUF1190"/>
    <property type="match status" value="1"/>
</dbReference>
<feature type="chain" id="PRO_1000065864" description="UPF0441 protein YgiB">
    <location>
        <begin position="1"/>
        <end position="223"/>
    </location>
</feature>
<feature type="region of interest" description="Disordered" evidence="2">
    <location>
        <begin position="178"/>
        <end position="223"/>
    </location>
</feature>
<feature type="compositionally biased region" description="Low complexity" evidence="2">
    <location>
        <begin position="178"/>
        <end position="195"/>
    </location>
</feature>
<feature type="compositionally biased region" description="Polar residues" evidence="2">
    <location>
        <begin position="204"/>
        <end position="223"/>
    </location>
</feature>